<name>AZUR1_ALCXX</name>
<evidence type="ECO:0007829" key="1">
    <source>
        <dbReference type="PDB" id="6L1V"/>
    </source>
</evidence>
<organism>
    <name type="scientific">Alcaligenes xylosoxydans xylosoxydans</name>
    <name type="common">Achromobacter xylosoxidans</name>
    <dbReference type="NCBI Taxonomy" id="85698"/>
    <lineage>
        <taxon>Bacteria</taxon>
        <taxon>Pseudomonadati</taxon>
        <taxon>Pseudomonadota</taxon>
        <taxon>Betaproteobacteria</taxon>
        <taxon>Burkholderiales</taxon>
        <taxon>Alcaligenaceae</taxon>
        <taxon>Achromobacter</taxon>
    </lineage>
</organism>
<accession>P56547</accession>
<dbReference type="PDB" id="1RKR">
    <property type="method" value="X-ray"/>
    <property type="resolution" value="2.45 A"/>
    <property type="chains" value="A/B/C/D=1-129"/>
</dbReference>
<dbReference type="PDB" id="6L1V">
    <property type="method" value="X-ray"/>
    <property type="resolution" value="2.25 A"/>
    <property type="chains" value="A/C/E/G=1-129"/>
</dbReference>
<dbReference type="PDBsum" id="1RKR"/>
<dbReference type="PDBsum" id="6L1V"/>
<dbReference type="SMR" id="P56547"/>
<dbReference type="eggNOG" id="COG3241">
    <property type="taxonomic scope" value="Bacteria"/>
</dbReference>
<dbReference type="EvolutionaryTrace" id="P56547"/>
<dbReference type="GO" id="GO:0042597">
    <property type="term" value="C:periplasmic space"/>
    <property type="evidence" value="ECO:0007669"/>
    <property type="project" value="UniProtKB-SubCell"/>
</dbReference>
<dbReference type="GO" id="GO:0005507">
    <property type="term" value="F:copper ion binding"/>
    <property type="evidence" value="ECO:0007669"/>
    <property type="project" value="InterPro"/>
</dbReference>
<dbReference type="GO" id="GO:0009055">
    <property type="term" value="F:electron transfer activity"/>
    <property type="evidence" value="ECO:0007669"/>
    <property type="project" value="InterPro"/>
</dbReference>
<dbReference type="CDD" id="cd13922">
    <property type="entry name" value="Azurin"/>
    <property type="match status" value="1"/>
</dbReference>
<dbReference type="FunFam" id="2.60.40.420:FF:000040">
    <property type="entry name" value="Azurin"/>
    <property type="match status" value="1"/>
</dbReference>
<dbReference type="Gene3D" id="2.60.40.420">
    <property type="entry name" value="Cupredoxins - blue copper proteins"/>
    <property type="match status" value="1"/>
</dbReference>
<dbReference type="InterPro" id="IPR014068">
    <property type="entry name" value="Azurin"/>
</dbReference>
<dbReference type="InterPro" id="IPR000923">
    <property type="entry name" value="BlueCu_1"/>
</dbReference>
<dbReference type="InterPro" id="IPR028871">
    <property type="entry name" value="BlueCu_1_BS"/>
</dbReference>
<dbReference type="InterPro" id="IPR050845">
    <property type="entry name" value="Cu-binding_ET"/>
</dbReference>
<dbReference type="InterPro" id="IPR008972">
    <property type="entry name" value="Cupredoxin"/>
</dbReference>
<dbReference type="NCBIfam" id="TIGR02695">
    <property type="entry name" value="azurin"/>
    <property type="match status" value="1"/>
</dbReference>
<dbReference type="PANTHER" id="PTHR38439">
    <property type="entry name" value="AURACYANIN-B"/>
    <property type="match status" value="1"/>
</dbReference>
<dbReference type="PANTHER" id="PTHR38439:SF2">
    <property type="entry name" value="OUTER MEMBRANE PROTEIN H.8"/>
    <property type="match status" value="1"/>
</dbReference>
<dbReference type="Pfam" id="PF00127">
    <property type="entry name" value="Copper-bind"/>
    <property type="match status" value="1"/>
</dbReference>
<dbReference type="SUPFAM" id="SSF49503">
    <property type="entry name" value="Cupredoxins"/>
    <property type="match status" value="1"/>
</dbReference>
<dbReference type="PROSITE" id="PS00196">
    <property type="entry name" value="COPPER_BLUE"/>
    <property type="match status" value="1"/>
</dbReference>
<keyword id="KW-0002">3D-structure</keyword>
<keyword id="KW-0186">Copper</keyword>
<keyword id="KW-1015">Disulfide bond</keyword>
<keyword id="KW-0249">Electron transport</keyword>
<keyword id="KW-0479">Metal-binding</keyword>
<keyword id="KW-0574">Periplasm</keyword>
<keyword id="KW-0813">Transport</keyword>
<feature type="chain" id="PRO_0000085544" description="Azurin-1">
    <location>
        <begin position="1"/>
        <end position="129"/>
    </location>
</feature>
<feature type="domain" description="Plastocyanin-like">
    <location>
        <begin position="1"/>
        <end position="129"/>
    </location>
</feature>
<feature type="binding site">
    <location>
        <position position="46"/>
    </location>
    <ligand>
        <name>Cu cation</name>
        <dbReference type="ChEBI" id="CHEBI:23378"/>
    </ligand>
</feature>
<feature type="binding site">
    <location>
        <position position="112"/>
    </location>
    <ligand>
        <name>Cu cation</name>
        <dbReference type="ChEBI" id="CHEBI:23378"/>
    </ligand>
</feature>
<feature type="binding site">
    <location>
        <position position="117"/>
    </location>
    <ligand>
        <name>Cu cation</name>
        <dbReference type="ChEBI" id="CHEBI:23378"/>
    </ligand>
</feature>
<feature type="binding site">
    <location>
        <position position="121"/>
    </location>
    <ligand>
        <name>Cu cation</name>
        <dbReference type="ChEBI" id="CHEBI:23378"/>
    </ligand>
</feature>
<feature type="disulfide bond">
    <location>
        <begin position="3"/>
        <end position="26"/>
    </location>
</feature>
<feature type="strand" evidence="1">
    <location>
        <begin position="4"/>
        <end position="9"/>
    </location>
</feature>
<feature type="strand" evidence="1">
    <location>
        <begin position="13"/>
        <end position="16"/>
    </location>
</feature>
<feature type="strand" evidence="1">
    <location>
        <begin position="18"/>
        <end position="23"/>
    </location>
</feature>
<feature type="strand" evidence="1">
    <location>
        <begin position="27"/>
        <end position="35"/>
    </location>
</feature>
<feature type="turn" evidence="1">
    <location>
        <begin position="41"/>
        <end position="43"/>
    </location>
</feature>
<feature type="strand" evidence="1">
    <location>
        <begin position="49"/>
        <end position="52"/>
    </location>
</feature>
<feature type="helix" evidence="1">
    <location>
        <begin position="53"/>
        <end position="55"/>
    </location>
</feature>
<feature type="helix" evidence="1">
    <location>
        <begin position="56"/>
        <end position="66"/>
    </location>
</feature>
<feature type="helix" evidence="1">
    <location>
        <begin position="68"/>
        <end position="70"/>
    </location>
</feature>
<feature type="strand" evidence="1">
    <location>
        <begin position="81"/>
        <end position="83"/>
    </location>
</feature>
<feature type="strand" evidence="1">
    <location>
        <begin position="92"/>
        <end position="98"/>
    </location>
</feature>
<feature type="helix" evidence="1">
    <location>
        <begin position="99"/>
        <end position="101"/>
    </location>
</feature>
<feature type="strand" evidence="1">
    <location>
        <begin position="108"/>
        <end position="111"/>
    </location>
</feature>
<feature type="helix" evidence="1">
    <location>
        <begin position="117"/>
        <end position="119"/>
    </location>
</feature>
<feature type="strand" evidence="1">
    <location>
        <begin position="121"/>
        <end position="128"/>
    </location>
</feature>
<reference key="1">
    <citation type="journal article" date="1998" name="Acta Crystallogr. D">
        <title>Structure of azurin I from the denitrifying bacterium Alcaligenes xylosoxidans NCIMB 11015 at 2.45-A resolution.</title>
        <authorList>
            <person name="Li C."/>
            <person name="Inoue T."/>
            <person name="Gotowda M."/>
            <person name="Suzuki S."/>
            <person name="Yamaguchi K."/>
            <person name="Kataoka K."/>
            <person name="Kai Y."/>
        </authorList>
    </citation>
    <scope>X-RAY CRYSTALLOGRAPHY (2.45 ANGSTROMS)</scope>
    <source>
        <strain>LMG 1865 / CCUG 61957 / NCIMB 11015 / Iwasaki</strain>
    </source>
</reference>
<proteinExistence type="evidence at protein level"/>
<comment type="function">
    <text>Transfers electrons from cytochrome c551 to cytochrome oxidase.</text>
</comment>
<comment type="subcellular location">
    <subcellularLocation>
        <location>Periplasm</location>
    </subcellularLocation>
</comment>
<sequence>AECSVDIAGNDGMQFDKKEITVSKSCKQFTVNLKHPGKLAKNVMGHNWVLTKQADMQGAVNDGMAAGLDNNYVKKDDARVIAHTKVIGGGETDSVTFDVSKLAAGEDYAYFCSFPGHFALMKGVLKLVD</sequence>
<protein>
    <recommendedName>
        <fullName>Azurin-1</fullName>
    </recommendedName>
    <alternativeName>
        <fullName>AZN-1</fullName>
    </alternativeName>
    <alternativeName>
        <fullName>Azurin-I</fullName>
    </alternativeName>
</protein>